<comment type="catalytic activity">
    <reaction evidence="1">
        <text>5-amino-1-(5-phospho-D-ribosyl)imidazole-4-carboxylate + L-aspartate + ATP = (2S)-2-[5-amino-1-(5-phospho-beta-D-ribosyl)imidazole-4-carboxamido]succinate + ADP + phosphate + 2 H(+)</text>
        <dbReference type="Rhea" id="RHEA:22628"/>
        <dbReference type="ChEBI" id="CHEBI:15378"/>
        <dbReference type="ChEBI" id="CHEBI:29991"/>
        <dbReference type="ChEBI" id="CHEBI:30616"/>
        <dbReference type="ChEBI" id="CHEBI:43474"/>
        <dbReference type="ChEBI" id="CHEBI:58443"/>
        <dbReference type="ChEBI" id="CHEBI:77657"/>
        <dbReference type="ChEBI" id="CHEBI:456216"/>
        <dbReference type="EC" id="6.3.2.6"/>
    </reaction>
</comment>
<comment type="pathway">
    <text evidence="1">Purine metabolism; IMP biosynthesis via de novo pathway; 5-amino-1-(5-phospho-D-ribosyl)imidazole-4-carboxamide from 5-amino-1-(5-phospho-D-ribosyl)imidazole-4-carboxylate: step 1/2.</text>
</comment>
<comment type="similarity">
    <text evidence="1">Belongs to the SAICAR synthetase family.</text>
</comment>
<organism>
    <name type="scientific">Pediococcus pentosaceus (strain ATCC 25745 / CCUG 21536 / LMG 10740 / 183-1w)</name>
    <dbReference type="NCBI Taxonomy" id="278197"/>
    <lineage>
        <taxon>Bacteria</taxon>
        <taxon>Bacillati</taxon>
        <taxon>Bacillota</taxon>
        <taxon>Bacilli</taxon>
        <taxon>Lactobacillales</taxon>
        <taxon>Lactobacillaceae</taxon>
        <taxon>Pediococcus</taxon>
    </lineage>
</organism>
<proteinExistence type="inferred from homology"/>
<protein>
    <recommendedName>
        <fullName evidence="1">Phosphoribosylaminoimidazole-succinocarboxamide synthase</fullName>
        <ecNumber evidence="1">6.3.2.6</ecNumber>
    </recommendedName>
    <alternativeName>
        <fullName evidence="1">SAICAR synthetase</fullName>
    </alternativeName>
</protein>
<sequence>MKKTTLIKEGKAKRLYNTDEKDLVWVEYMDQATALNGKRKDHIAGKGELNNQIDCILFEQLVAKGIHTDFVQKLSNNEQLNRKVKIIPLEVVVRNAASGSFQRKFDVSYLQAFDQPVVEFFYKSDELDDPFINTNKAIALKIIDLEESQRLEKMALEINQILKERFAKAHLQLVDFKVEFGKTADDEIVLADEISPDSCRLVDLTTKESLDKDVFRKKTGDLVTVYQEVLNRLNNSQEEVHG</sequence>
<dbReference type="EC" id="6.3.2.6" evidence="1"/>
<dbReference type="EMBL" id="CP000422">
    <property type="protein sequence ID" value="ABJ68496.1"/>
    <property type="molecule type" value="Genomic_DNA"/>
</dbReference>
<dbReference type="RefSeq" id="WP_011673682.1">
    <property type="nucleotide sequence ID" value="NC_008525.1"/>
</dbReference>
<dbReference type="SMR" id="Q03E76"/>
<dbReference type="STRING" id="278197.PEPE_1465"/>
<dbReference type="GeneID" id="33062714"/>
<dbReference type="KEGG" id="ppe:PEPE_1465"/>
<dbReference type="eggNOG" id="COG0152">
    <property type="taxonomic scope" value="Bacteria"/>
</dbReference>
<dbReference type="HOGENOM" id="CLU_061495_2_0_9"/>
<dbReference type="OrthoDB" id="9801549at2"/>
<dbReference type="UniPathway" id="UPA00074">
    <property type="reaction ID" value="UER00131"/>
</dbReference>
<dbReference type="Proteomes" id="UP000000773">
    <property type="component" value="Chromosome"/>
</dbReference>
<dbReference type="GO" id="GO:0005524">
    <property type="term" value="F:ATP binding"/>
    <property type="evidence" value="ECO:0007669"/>
    <property type="project" value="UniProtKB-KW"/>
</dbReference>
<dbReference type="GO" id="GO:0004639">
    <property type="term" value="F:phosphoribosylaminoimidazolesuccinocarboxamide synthase activity"/>
    <property type="evidence" value="ECO:0007669"/>
    <property type="project" value="UniProtKB-UniRule"/>
</dbReference>
<dbReference type="GO" id="GO:0006189">
    <property type="term" value="P:'de novo' IMP biosynthetic process"/>
    <property type="evidence" value="ECO:0007669"/>
    <property type="project" value="UniProtKB-UniRule"/>
</dbReference>
<dbReference type="GO" id="GO:0009236">
    <property type="term" value="P:cobalamin biosynthetic process"/>
    <property type="evidence" value="ECO:0007669"/>
    <property type="project" value="InterPro"/>
</dbReference>
<dbReference type="CDD" id="cd01415">
    <property type="entry name" value="SAICAR_synt_PurC"/>
    <property type="match status" value="1"/>
</dbReference>
<dbReference type="Gene3D" id="3.30.470.20">
    <property type="entry name" value="ATP-grasp fold, B domain"/>
    <property type="match status" value="1"/>
</dbReference>
<dbReference type="Gene3D" id="3.30.200.20">
    <property type="entry name" value="Phosphorylase Kinase, domain 1"/>
    <property type="match status" value="1"/>
</dbReference>
<dbReference type="HAMAP" id="MF_00137">
    <property type="entry name" value="SAICAR_synth"/>
    <property type="match status" value="1"/>
</dbReference>
<dbReference type="InterPro" id="IPR028923">
    <property type="entry name" value="SAICAR_synt/ADE2_N"/>
</dbReference>
<dbReference type="InterPro" id="IPR033934">
    <property type="entry name" value="SAICAR_synt_PurC"/>
</dbReference>
<dbReference type="InterPro" id="IPR001636">
    <property type="entry name" value="SAICAR_synth"/>
</dbReference>
<dbReference type="InterPro" id="IPR050089">
    <property type="entry name" value="SAICAR_synthetase"/>
</dbReference>
<dbReference type="InterPro" id="IPR018236">
    <property type="entry name" value="SAICAR_synthetase_CS"/>
</dbReference>
<dbReference type="NCBIfam" id="TIGR00081">
    <property type="entry name" value="purC"/>
    <property type="match status" value="1"/>
</dbReference>
<dbReference type="PANTHER" id="PTHR43599">
    <property type="entry name" value="MULTIFUNCTIONAL PROTEIN ADE2"/>
    <property type="match status" value="1"/>
</dbReference>
<dbReference type="PANTHER" id="PTHR43599:SF3">
    <property type="entry name" value="SI:DKEY-6E2.2"/>
    <property type="match status" value="1"/>
</dbReference>
<dbReference type="Pfam" id="PF01259">
    <property type="entry name" value="SAICAR_synt"/>
    <property type="match status" value="1"/>
</dbReference>
<dbReference type="SUPFAM" id="SSF56104">
    <property type="entry name" value="SAICAR synthase-like"/>
    <property type="match status" value="1"/>
</dbReference>
<dbReference type="PROSITE" id="PS01057">
    <property type="entry name" value="SAICAR_SYNTHETASE_1"/>
    <property type="match status" value="1"/>
</dbReference>
<gene>
    <name evidence="1" type="primary">purC</name>
    <name type="ordered locus">PEPE_1465</name>
</gene>
<feature type="chain" id="PRO_1000018746" description="Phosphoribosylaminoimidazole-succinocarboxamide synthase">
    <location>
        <begin position="1"/>
        <end position="242"/>
    </location>
</feature>
<accession>Q03E76</accession>
<evidence type="ECO:0000255" key="1">
    <source>
        <dbReference type="HAMAP-Rule" id="MF_00137"/>
    </source>
</evidence>
<reference key="1">
    <citation type="journal article" date="2006" name="Proc. Natl. Acad. Sci. U.S.A.">
        <title>Comparative genomics of the lactic acid bacteria.</title>
        <authorList>
            <person name="Makarova K.S."/>
            <person name="Slesarev A."/>
            <person name="Wolf Y.I."/>
            <person name="Sorokin A."/>
            <person name="Mirkin B."/>
            <person name="Koonin E.V."/>
            <person name="Pavlov A."/>
            <person name="Pavlova N."/>
            <person name="Karamychev V."/>
            <person name="Polouchine N."/>
            <person name="Shakhova V."/>
            <person name="Grigoriev I."/>
            <person name="Lou Y."/>
            <person name="Rohksar D."/>
            <person name="Lucas S."/>
            <person name="Huang K."/>
            <person name="Goodstein D.M."/>
            <person name="Hawkins T."/>
            <person name="Plengvidhya V."/>
            <person name="Welker D."/>
            <person name="Hughes J."/>
            <person name="Goh Y."/>
            <person name="Benson A."/>
            <person name="Baldwin K."/>
            <person name="Lee J.-H."/>
            <person name="Diaz-Muniz I."/>
            <person name="Dosti B."/>
            <person name="Smeianov V."/>
            <person name="Wechter W."/>
            <person name="Barabote R."/>
            <person name="Lorca G."/>
            <person name="Altermann E."/>
            <person name="Barrangou R."/>
            <person name="Ganesan B."/>
            <person name="Xie Y."/>
            <person name="Rawsthorne H."/>
            <person name="Tamir D."/>
            <person name="Parker C."/>
            <person name="Breidt F."/>
            <person name="Broadbent J.R."/>
            <person name="Hutkins R."/>
            <person name="O'Sullivan D."/>
            <person name="Steele J."/>
            <person name="Unlu G."/>
            <person name="Saier M.H. Jr."/>
            <person name="Klaenhammer T."/>
            <person name="Richardson P."/>
            <person name="Kozyavkin S."/>
            <person name="Weimer B.C."/>
            <person name="Mills D.A."/>
        </authorList>
    </citation>
    <scope>NUCLEOTIDE SEQUENCE [LARGE SCALE GENOMIC DNA]</scope>
    <source>
        <strain>ATCC 25745 / CCUG 21536 / LMG 10740 / 183-1w</strain>
    </source>
</reference>
<name>PUR7_PEDPA</name>
<keyword id="KW-0067">ATP-binding</keyword>
<keyword id="KW-0436">Ligase</keyword>
<keyword id="KW-0547">Nucleotide-binding</keyword>
<keyword id="KW-0658">Purine biosynthesis</keyword>